<reference key="1">
    <citation type="journal article" date="2005" name="Proc. Natl. Acad. Sci. U.S.A.">
        <title>Genome analysis of multiple pathogenic isolates of Streptococcus agalactiae: implications for the microbial 'pan-genome'.</title>
        <authorList>
            <person name="Tettelin H."/>
            <person name="Masignani V."/>
            <person name="Cieslewicz M.J."/>
            <person name="Donati C."/>
            <person name="Medini D."/>
            <person name="Ward N.L."/>
            <person name="Angiuoli S.V."/>
            <person name="Crabtree J."/>
            <person name="Jones A.L."/>
            <person name="Durkin A.S."/>
            <person name="DeBoy R.T."/>
            <person name="Davidsen T.M."/>
            <person name="Mora M."/>
            <person name="Scarselli M."/>
            <person name="Margarit y Ros I."/>
            <person name="Peterson J.D."/>
            <person name="Hauser C.R."/>
            <person name="Sundaram J.P."/>
            <person name="Nelson W.C."/>
            <person name="Madupu R."/>
            <person name="Brinkac L.M."/>
            <person name="Dodson R.J."/>
            <person name="Rosovitz M.J."/>
            <person name="Sullivan S.A."/>
            <person name="Daugherty S.C."/>
            <person name="Haft D.H."/>
            <person name="Selengut J."/>
            <person name="Gwinn M.L."/>
            <person name="Zhou L."/>
            <person name="Zafar N."/>
            <person name="Khouri H."/>
            <person name="Radune D."/>
            <person name="Dimitrov G."/>
            <person name="Watkins K."/>
            <person name="O'Connor K.J."/>
            <person name="Smith S."/>
            <person name="Utterback T.R."/>
            <person name="White O."/>
            <person name="Rubens C.E."/>
            <person name="Grandi G."/>
            <person name="Madoff L.C."/>
            <person name="Kasper D.L."/>
            <person name="Telford J.L."/>
            <person name="Wessels M.R."/>
            <person name="Rappuoli R."/>
            <person name="Fraser C.M."/>
        </authorList>
    </citation>
    <scope>NUCLEOTIDE SEQUENCE [LARGE SCALE GENOMIC DNA]</scope>
    <source>
        <strain>ATCC 27591 / A909 / CDC SS700</strain>
    </source>
</reference>
<name>KCY_STRA1</name>
<proteinExistence type="inferred from homology"/>
<evidence type="ECO:0000255" key="1">
    <source>
        <dbReference type="HAMAP-Rule" id="MF_00238"/>
    </source>
</evidence>
<keyword id="KW-0067">ATP-binding</keyword>
<keyword id="KW-0963">Cytoplasm</keyword>
<keyword id="KW-0418">Kinase</keyword>
<keyword id="KW-0547">Nucleotide-binding</keyword>
<keyword id="KW-0808">Transferase</keyword>
<comment type="catalytic activity">
    <reaction evidence="1">
        <text>CMP + ATP = CDP + ADP</text>
        <dbReference type="Rhea" id="RHEA:11600"/>
        <dbReference type="ChEBI" id="CHEBI:30616"/>
        <dbReference type="ChEBI" id="CHEBI:58069"/>
        <dbReference type="ChEBI" id="CHEBI:60377"/>
        <dbReference type="ChEBI" id="CHEBI:456216"/>
        <dbReference type="EC" id="2.7.4.25"/>
    </reaction>
</comment>
<comment type="catalytic activity">
    <reaction evidence="1">
        <text>dCMP + ATP = dCDP + ADP</text>
        <dbReference type="Rhea" id="RHEA:25094"/>
        <dbReference type="ChEBI" id="CHEBI:30616"/>
        <dbReference type="ChEBI" id="CHEBI:57566"/>
        <dbReference type="ChEBI" id="CHEBI:58593"/>
        <dbReference type="ChEBI" id="CHEBI:456216"/>
        <dbReference type="EC" id="2.7.4.25"/>
    </reaction>
</comment>
<comment type="subcellular location">
    <subcellularLocation>
        <location evidence="1">Cytoplasm</location>
    </subcellularLocation>
</comment>
<comment type="similarity">
    <text evidence="1">Belongs to the cytidylate kinase family. Type 1 subfamily.</text>
</comment>
<organism>
    <name type="scientific">Streptococcus agalactiae serotype Ia (strain ATCC 27591 / A909 / CDC SS700)</name>
    <dbReference type="NCBI Taxonomy" id="205921"/>
    <lineage>
        <taxon>Bacteria</taxon>
        <taxon>Bacillati</taxon>
        <taxon>Bacillota</taxon>
        <taxon>Bacilli</taxon>
        <taxon>Lactobacillales</taxon>
        <taxon>Streptococcaceae</taxon>
        <taxon>Streptococcus</taxon>
    </lineage>
</organism>
<accession>Q3K0C7</accession>
<gene>
    <name evidence="1" type="primary">cmk</name>
    <name type="ordered locus">SAK_1418</name>
</gene>
<sequence>MNSINIAIDGPASSGKSTVAKIIAKNLNYTYLDTGAMYRCATYLALQHGYEAQDVSKILGLLAERPISFGKAEDGSQTVFLGTEEVTLAIRQNDVTNNVSWVSAIPEIREELVNQQRRIAKDGAIIMDGRDIGTVVLPDAELKIFLVASVDERAERRFKENQEKGIESDFETLKSEIAARDYKDSHREVSPLEAAEDAIEFDTTGVSIEGVVTFIQEKAEKIIDMKN</sequence>
<dbReference type="EC" id="2.7.4.25" evidence="1"/>
<dbReference type="EMBL" id="CP000114">
    <property type="protein sequence ID" value="ABA45796.1"/>
    <property type="molecule type" value="Genomic_DNA"/>
</dbReference>
<dbReference type="RefSeq" id="WP_001084717.1">
    <property type="nucleotide sequence ID" value="NC_007432.1"/>
</dbReference>
<dbReference type="SMR" id="Q3K0C7"/>
<dbReference type="KEGG" id="sak:SAK_1418"/>
<dbReference type="HOGENOM" id="CLU_079959_0_2_9"/>
<dbReference type="GO" id="GO:0005829">
    <property type="term" value="C:cytosol"/>
    <property type="evidence" value="ECO:0007669"/>
    <property type="project" value="TreeGrafter"/>
</dbReference>
<dbReference type="GO" id="GO:0005524">
    <property type="term" value="F:ATP binding"/>
    <property type="evidence" value="ECO:0007669"/>
    <property type="project" value="UniProtKB-UniRule"/>
</dbReference>
<dbReference type="GO" id="GO:0036430">
    <property type="term" value="F:CMP kinase activity"/>
    <property type="evidence" value="ECO:0007669"/>
    <property type="project" value="RHEA"/>
</dbReference>
<dbReference type="GO" id="GO:0036431">
    <property type="term" value="F:dCMP kinase activity"/>
    <property type="evidence" value="ECO:0007669"/>
    <property type="project" value="RHEA"/>
</dbReference>
<dbReference type="GO" id="GO:0015949">
    <property type="term" value="P:nucleobase-containing small molecule interconversion"/>
    <property type="evidence" value="ECO:0007669"/>
    <property type="project" value="TreeGrafter"/>
</dbReference>
<dbReference type="GO" id="GO:0006220">
    <property type="term" value="P:pyrimidine nucleotide metabolic process"/>
    <property type="evidence" value="ECO:0007669"/>
    <property type="project" value="UniProtKB-UniRule"/>
</dbReference>
<dbReference type="CDD" id="cd02020">
    <property type="entry name" value="CMPK"/>
    <property type="match status" value="1"/>
</dbReference>
<dbReference type="FunFam" id="3.40.50.300:FF:000484">
    <property type="entry name" value="Cytidylate kinase"/>
    <property type="match status" value="1"/>
</dbReference>
<dbReference type="Gene3D" id="3.40.50.300">
    <property type="entry name" value="P-loop containing nucleotide triphosphate hydrolases"/>
    <property type="match status" value="1"/>
</dbReference>
<dbReference type="HAMAP" id="MF_00238">
    <property type="entry name" value="Cytidyl_kinase_type1"/>
    <property type="match status" value="1"/>
</dbReference>
<dbReference type="InterPro" id="IPR003136">
    <property type="entry name" value="Cytidylate_kin"/>
</dbReference>
<dbReference type="InterPro" id="IPR011994">
    <property type="entry name" value="Cytidylate_kinase_dom"/>
</dbReference>
<dbReference type="InterPro" id="IPR027417">
    <property type="entry name" value="P-loop_NTPase"/>
</dbReference>
<dbReference type="NCBIfam" id="TIGR00017">
    <property type="entry name" value="cmk"/>
    <property type="match status" value="1"/>
</dbReference>
<dbReference type="PANTHER" id="PTHR21299:SF2">
    <property type="entry name" value="CYTIDYLATE KINASE"/>
    <property type="match status" value="1"/>
</dbReference>
<dbReference type="PANTHER" id="PTHR21299">
    <property type="entry name" value="CYTIDYLATE KINASE/PANTOATE-BETA-ALANINE LIGASE"/>
    <property type="match status" value="1"/>
</dbReference>
<dbReference type="Pfam" id="PF02224">
    <property type="entry name" value="Cytidylate_kin"/>
    <property type="match status" value="1"/>
</dbReference>
<dbReference type="SUPFAM" id="SSF52540">
    <property type="entry name" value="P-loop containing nucleoside triphosphate hydrolases"/>
    <property type="match status" value="1"/>
</dbReference>
<protein>
    <recommendedName>
        <fullName evidence="1">Cytidylate kinase</fullName>
        <shortName evidence="1">CK</shortName>
        <ecNumber evidence="1">2.7.4.25</ecNumber>
    </recommendedName>
    <alternativeName>
        <fullName evidence="1">Cytidine monophosphate kinase</fullName>
        <shortName evidence="1">CMP kinase</shortName>
    </alternativeName>
</protein>
<feature type="chain" id="PRO_1000048293" description="Cytidylate kinase">
    <location>
        <begin position="1"/>
        <end position="227"/>
    </location>
</feature>
<feature type="binding site" evidence="1">
    <location>
        <begin position="10"/>
        <end position="18"/>
    </location>
    <ligand>
        <name>ATP</name>
        <dbReference type="ChEBI" id="CHEBI:30616"/>
    </ligand>
</feature>